<protein>
    <recommendedName>
        <fullName evidence="4">Trehalose-2-sulfate acyltransferase PapA2</fullName>
        <ecNumber evidence="2 3">2.3.1.288</ecNumber>
    </recommendedName>
    <alternativeName>
        <fullName evidence="4">2-O-sulfo trehalose long-chain-acyltransferase</fullName>
    </alternativeName>
    <alternativeName>
        <fullName>Polyketide synthase-associated protein A2</fullName>
    </alternativeName>
</protein>
<reference key="1">
    <citation type="journal article" date="1998" name="Nature">
        <title>Deciphering the biology of Mycobacterium tuberculosis from the complete genome sequence.</title>
        <authorList>
            <person name="Cole S.T."/>
            <person name="Brosch R."/>
            <person name="Parkhill J."/>
            <person name="Garnier T."/>
            <person name="Churcher C.M."/>
            <person name="Harris D.E."/>
            <person name="Gordon S.V."/>
            <person name="Eiglmeier K."/>
            <person name="Gas S."/>
            <person name="Barry C.E. III"/>
            <person name="Tekaia F."/>
            <person name="Badcock K."/>
            <person name="Basham D."/>
            <person name="Brown D."/>
            <person name="Chillingworth T."/>
            <person name="Connor R."/>
            <person name="Davies R.M."/>
            <person name="Devlin K."/>
            <person name="Feltwell T."/>
            <person name="Gentles S."/>
            <person name="Hamlin N."/>
            <person name="Holroyd S."/>
            <person name="Hornsby T."/>
            <person name="Jagels K."/>
            <person name="Krogh A."/>
            <person name="McLean J."/>
            <person name="Moule S."/>
            <person name="Murphy L.D."/>
            <person name="Oliver S."/>
            <person name="Osborne J."/>
            <person name="Quail M.A."/>
            <person name="Rajandream M.A."/>
            <person name="Rogers J."/>
            <person name="Rutter S."/>
            <person name="Seeger K."/>
            <person name="Skelton S."/>
            <person name="Squares S."/>
            <person name="Squares R."/>
            <person name="Sulston J.E."/>
            <person name="Taylor K."/>
            <person name="Whitehead S."/>
            <person name="Barrell B.G."/>
        </authorList>
    </citation>
    <scope>NUCLEOTIDE SEQUENCE [LARGE SCALE GENOMIC DNA]</scope>
    <source>
        <strain>ATCC 25618 / H37Rv</strain>
    </source>
</reference>
<reference key="2">
    <citation type="journal article" date="2007" name="Microbiology">
        <title>Two polyketide-synthase-associated acyltransferases are required for sulfolipid biosynthesis in Mycobacterium tuberculosis.</title>
        <authorList>
            <person name="Bhatt K."/>
            <person name="Gurcha S.S."/>
            <person name="Bhatt A."/>
            <person name="Besra G.S."/>
            <person name="Jacobs W.R. Jr."/>
        </authorList>
    </citation>
    <scope>FUNCTION AS AN ACYLTRANSFERASE</scope>
    <scope>DISRUPTION PHENOTYPE</scope>
    <scope>MUTAGENESIS OF HIS-166 AND ASP-170</scope>
    <source>
        <strain>ATCC 25618 / H37Rv</strain>
    </source>
</reference>
<reference key="3">
    <citation type="journal article" date="2007" name="Proc. Natl. Acad. Sci. U.S.A.">
        <title>PapA1 and PapA2 are acyltransferases essential for the biosynthesis of the Mycobacterium tuberculosis virulence factor sulfolipid-1.</title>
        <authorList>
            <person name="Kumar P."/>
            <person name="Schelle M.W."/>
            <person name="Jain M."/>
            <person name="Lin F.L."/>
            <person name="Petzold C.J."/>
            <person name="Leavell M.D."/>
            <person name="Leary J.A."/>
            <person name="Cox J.S."/>
            <person name="Bertozzi C.R."/>
        </authorList>
    </citation>
    <scope>FUNCTION</scope>
    <scope>CATALYTIC ACTIVITY</scope>
    <scope>BIOPHYSICOCHEMICAL PROPERTIES</scope>
    <scope>DISRUPTION PHENOTYPE</scope>
    <source>
        <strain>ATCC 25618 / H37Rv</strain>
    </source>
</reference>
<reference key="4">
    <citation type="journal article" date="2011" name="Mol. Cell. Proteomics">
        <title>Proteogenomic analysis of Mycobacterium tuberculosis by high resolution mass spectrometry.</title>
        <authorList>
            <person name="Kelkar D.S."/>
            <person name="Kumar D."/>
            <person name="Kumar P."/>
            <person name="Balakrishnan L."/>
            <person name="Muthusamy B."/>
            <person name="Yadav A.K."/>
            <person name="Shrivastava P."/>
            <person name="Marimuthu A."/>
            <person name="Anand S."/>
            <person name="Sundaram H."/>
            <person name="Kingsbury R."/>
            <person name="Harsha H.C."/>
            <person name="Nair B."/>
            <person name="Prasad T.S."/>
            <person name="Chauhan D.S."/>
            <person name="Katoch K."/>
            <person name="Katoch V.M."/>
            <person name="Kumar P."/>
            <person name="Chaerkady R."/>
            <person name="Ramachandran S."/>
            <person name="Dash D."/>
            <person name="Pandey A."/>
        </authorList>
    </citation>
    <scope>IDENTIFICATION BY MASS SPECTROMETRY [LARGE SCALE ANALYSIS]</scope>
    <source>
        <strain>ATCC 25618 / H37Rv</strain>
    </source>
</reference>
<reference key="5">
    <citation type="journal article" date="2012" name="J. Biol. Chem.">
        <title>Elucidation and chemical modulation of sulfolipid-1 biosynthesis in Mycobacterium tuberculosis.</title>
        <authorList>
            <person name="Seeliger J.C."/>
            <person name="Holsclaw C.M."/>
            <person name="Schelle M.W."/>
            <person name="Botyanszki Z."/>
            <person name="Gilmore S.A."/>
            <person name="Tully S.E."/>
            <person name="Niederweis M."/>
            <person name="Cravatt B.F."/>
            <person name="Leary J.A."/>
            <person name="Bertozzi C.R."/>
        </authorList>
    </citation>
    <scope>FUNCTION</scope>
    <scope>CATALYTIC ACTIVITY</scope>
</reference>
<dbReference type="EC" id="2.3.1.288" evidence="2 3"/>
<dbReference type="EMBL" id="AL123456">
    <property type="protein sequence ID" value="CCP46649.1"/>
    <property type="molecule type" value="Genomic_DNA"/>
</dbReference>
<dbReference type="PIR" id="H70521">
    <property type="entry name" value="H70521"/>
</dbReference>
<dbReference type="RefSeq" id="WP_003899707.1">
    <property type="nucleotide sequence ID" value="NZ_NVQJ01000022.1"/>
</dbReference>
<dbReference type="RefSeq" id="YP_178020.1">
    <property type="nucleotide sequence ID" value="NC_000962.3"/>
</dbReference>
<dbReference type="PDB" id="6AEF">
    <property type="method" value="X-ray"/>
    <property type="resolution" value="2.16 A"/>
    <property type="chains" value="A/B=2-468"/>
</dbReference>
<dbReference type="PDBsum" id="6AEF"/>
<dbReference type="SMR" id="P9WIK7"/>
<dbReference type="FunCoup" id="P9WIK7">
    <property type="interactions" value="2"/>
</dbReference>
<dbReference type="STRING" id="83332.Rv3820c"/>
<dbReference type="SwissLipids" id="SLP:000001029"/>
<dbReference type="PaxDb" id="83332-Rv3820c"/>
<dbReference type="DNASU" id="886140"/>
<dbReference type="GeneID" id="886140"/>
<dbReference type="KEGG" id="mtu:Rv3820c"/>
<dbReference type="KEGG" id="mtv:RVBD_3820c"/>
<dbReference type="TubercuList" id="Rv3820c"/>
<dbReference type="eggNOG" id="COG1020">
    <property type="taxonomic scope" value="Bacteria"/>
</dbReference>
<dbReference type="InParanoid" id="P9WIK7"/>
<dbReference type="OrthoDB" id="9123229at2"/>
<dbReference type="PhylomeDB" id="P9WIK7"/>
<dbReference type="BioCyc" id="MetaCyc:G185E-8116-MONOMER"/>
<dbReference type="BRENDA" id="2.3.1.288">
    <property type="organism ID" value="3445"/>
</dbReference>
<dbReference type="SABIO-RK" id="P9WIK7"/>
<dbReference type="Proteomes" id="UP000001584">
    <property type="component" value="Chromosome"/>
</dbReference>
<dbReference type="GO" id="GO:0016747">
    <property type="term" value="F:acyltransferase activity, transferring groups other than amino-acyl groups"/>
    <property type="evidence" value="ECO:0000314"/>
    <property type="project" value="MTBBASE"/>
</dbReference>
<dbReference type="GO" id="GO:0071555">
    <property type="term" value="P:cell wall organization"/>
    <property type="evidence" value="ECO:0007669"/>
    <property type="project" value="UniProtKB-KW"/>
</dbReference>
<dbReference type="GO" id="GO:0046506">
    <property type="term" value="P:sulfolipid biosynthetic process"/>
    <property type="evidence" value="ECO:0000315"/>
    <property type="project" value="MTBBASE"/>
</dbReference>
<dbReference type="FunFam" id="3.30.559.10:FF:000022">
    <property type="entry name" value="Trehalose-2-sulfate acyltransferase papA2"/>
    <property type="match status" value="1"/>
</dbReference>
<dbReference type="FunFam" id="3.30.559.30:FF:000007">
    <property type="entry name" value="Trehalose-2-sulfate acyltransferase papA2"/>
    <property type="match status" value="1"/>
</dbReference>
<dbReference type="Gene3D" id="3.30.559.10">
    <property type="entry name" value="Chloramphenicol acetyltransferase-like domain"/>
    <property type="match status" value="1"/>
</dbReference>
<dbReference type="Gene3D" id="3.30.559.30">
    <property type="entry name" value="Nonribosomal peptide synthetase, condensation domain"/>
    <property type="match status" value="1"/>
</dbReference>
<dbReference type="InterPro" id="IPR023213">
    <property type="entry name" value="CAT-like_dom_sf"/>
</dbReference>
<dbReference type="InterPro" id="IPR001242">
    <property type="entry name" value="Condensatn"/>
</dbReference>
<dbReference type="Pfam" id="PF00668">
    <property type="entry name" value="Condensation"/>
    <property type="match status" value="1"/>
</dbReference>
<dbReference type="SUPFAM" id="SSF52777">
    <property type="entry name" value="CoA-dependent acyltransferases"/>
    <property type="match status" value="2"/>
</dbReference>
<evidence type="ECO:0000269" key="1">
    <source>
    </source>
</evidence>
<evidence type="ECO:0000269" key="2">
    <source>
    </source>
</evidence>
<evidence type="ECO:0000269" key="3">
    <source>
    </source>
</evidence>
<evidence type="ECO:0000305" key="4"/>
<evidence type="ECO:0007829" key="5">
    <source>
        <dbReference type="PDB" id="6AEF"/>
    </source>
</evidence>
<accession>P9WIK7</accession>
<accession>L0TDW1</accession>
<accession>Q79F94</accession>
<accession>Q7D4T4</accession>
<proteinExistence type="evidence at protein level"/>
<gene>
    <name type="primary">papA2</name>
    <name type="ordered locus">Rv3820c</name>
</gene>
<comment type="function">
    <text evidence="1 2 3">Required for the biosynthesis of sulfolipid-1 (SL-1), a major mycobacterial cell wall lipid (PubMed:17259623, PubMed:17592143, PubMed:22194604). Catalyzes the acylation of trehalose-2-sulfate by adding the palmitoyl group at the 2'-position to yield the intermediate trehalose-2-sulfate-2'-palmitate (SL659) (PubMed:17592143, PubMed:22194604).</text>
</comment>
<comment type="catalytic activity">
    <reaction evidence="2 3">
        <text>2-O-sulfo-alpha,alpha-trehalose + hexadecanoyl-CoA = 2-O-sulfo-2'-O-hexadecanoyl-alpha,alpha-trehalose + CoA</text>
        <dbReference type="Rhea" id="RHEA:44060"/>
        <dbReference type="ChEBI" id="CHEBI:57287"/>
        <dbReference type="ChEBI" id="CHEBI:57379"/>
        <dbReference type="ChEBI" id="CHEBI:60091"/>
        <dbReference type="ChEBI" id="CHEBI:60092"/>
        <dbReference type="EC" id="2.3.1.288"/>
    </reaction>
    <physiologicalReaction direction="left-to-right" evidence="2 3">
        <dbReference type="Rhea" id="RHEA:44061"/>
    </physiologicalReaction>
</comment>
<comment type="biophysicochemical properties">
    <kinetics>
        <KM evidence="2">2.5 mM for trehalose-2-sulfate</KM>
        <KM evidence="2">5.96 uM for palmitoyl-CoA</KM>
        <text evidence="2">kcat is 0.4 min(-1) with trehalose-2-sulfate as substrate. kcat is 0.19 min(-1) with palmitoyl-CoA as substrate.</text>
    </kinetics>
</comment>
<comment type="disruption phenotype">
    <text evidence="1 2">Null mutant does not produce SL-1 (PubMed:17259623, PubMed:17592143). Disruption of the gene does not alter the virulence of M.tuberculosis in mice (PubMed:17592143).</text>
</comment>
<comment type="similarity">
    <text evidence="4">Belongs to the PapA acyltransferase family.</text>
</comment>
<feature type="chain" id="PRO_0000314662" description="Trehalose-2-sulfate acyltransferase PapA2">
    <location>
        <begin position="1"/>
        <end position="468"/>
    </location>
</feature>
<feature type="mutagenesis site" description="Loss of sulfolipid-1 (SL-1) production." evidence="1">
    <original>H</original>
    <variation>A</variation>
    <location>
        <position position="166"/>
    </location>
</feature>
<feature type="mutagenesis site" description="Loss of sulfolipid-1 (SL-1) production." evidence="1">
    <original>D</original>
    <variation>A</variation>
    <location>
        <position position="170"/>
    </location>
</feature>
<feature type="strand" evidence="5">
    <location>
        <begin position="3"/>
        <end position="6"/>
    </location>
</feature>
<feature type="helix" evidence="5">
    <location>
        <begin position="7"/>
        <end position="9"/>
    </location>
</feature>
<feature type="strand" evidence="5">
    <location>
        <begin position="14"/>
        <end position="22"/>
    </location>
</feature>
<feature type="helix" evidence="5">
    <location>
        <begin position="24"/>
        <end position="31"/>
    </location>
</feature>
<feature type="strand" evidence="5">
    <location>
        <begin position="35"/>
        <end position="37"/>
    </location>
</feature>
<feature type="helix" evidence="5">
    <location>
        <begin position="42"/>
        <end position="56"/>
    </location>
</feature>
<feature type="strand" evidence="5">
    <location>
        <begin position="64"/>
        <end position="73"/>
    </location>
</feature>
<feature type="helix" evidence="5">
    <location>
        <begin position="77"/>
        <end position="90"/>
    </location>
</feature>
<feature type="helix" evidence="5">
    <location>
        <begin position="92"/>
        <end position="94"/>
    </location>
</feature>
<feature type="strand" evidence="5">
    <location>
        <begin position="95"/>
        <end position="100"/>
    </location>
</feature>
<feature type="strand" evidence="5">
    <location>
        <begin position="102"/>
        <end position="104"/>
    </location>
</feature>
<feature type="strand" evidence="5">
    <location>
        <begin position="106"/>
        <end position="110"/>
    </location>
</feature>
<feature type="helix" evidence="5">
    <location>
        <begin position="114"/>
        <end position="116"/>
    </location>
</feature>
<feature type="strand" evidence="5">
    <location>
        <begin position="119"/>
        <end position="123"/>
    </location>
</feature>
<feature type="helix" evidence="5">
    <location>
        <begin position="129"/>
        <end position="136"/>
    </location>
</feature>
<feature type="strand" evidence="5">
    <location>
        <begin position="147"/>
        <end position="153"/>
    </location>
</feature>
<feature type="strand" evidence="5">
    <location>
        <begin position="155"/>
        <end position="165"/>
    </location>
</feature>
<feature type="helix" evidence="5">
    <location>
        <begin position="166"/>
        <end position="168"/>
    </location>
</feature>
<feature type="helix" evidence="5">
    <location>
        <begin position="173"/>
        <end position="180"/>
    </location>
</feature>
<feature type="helix" evidence="5">
    <location>
        <begin position="182"/>
        <end position="189"/>
    </location>
</feature>
<feature type="helix" evidence="5">
    <location>
        <begin position="203"/>
        <end position="215"/>
    </location>
</feature>
<feature type="helix" evidence="5">
    <location>
        <begin position="222"/>
        <end position="233"/>
    </location>
</feature>
<feature type="turn" evidence="5">
    <location>
        <begin position="234"/>
        <end position="236"/>
    </location>
</feature>
<feature type="strand" evidence="5">
    <location>
        <begin position="253"/>
        <end position="263"/>
    </location>
</feature>
<feature type="helix" evidence="5">
    <location>
        <begin position="264"/>
        <end position="276"/>
    </location>
</feature>
<feature type="helix" evidence="5">
    <location>
        <begin position="281"/>
        <end position="297"/>
    </location>
</feature>
<feature type="strand" evidence="5">
    <location>
        <begin position="300"/>
        <end position="309"/>
    </location>
</feature>
<feature type="helix" evidence="5">
    <location>
        <begin position="314"/>
        <end position="317"/>
    </location>
</feature>
<feature type="strand" evidence="5">
    <location>
        <begin position="324"/>
        <end position="332"/>
    </location>
</feature>
<feature type="helix" evidence="5">
    <location>
        <begin position="338"/>
        <end position="352"/>
    </location>
</feature>
<feature type="helix" evidence="5">
    <location>
        <begin position="353"/>
        <end position="355"/>
    </location>
</feature>
<feature type="helix" evidence="5">
    <location>
        <begin position="360"/>
        <end position="366"/>
    </location>
</feature>
<feature type="helix" evidence="5">
    <location>
        <begin position="369"/>
        <end position="371"/>
    </location>
</feature>
<feature type="strand" evidence="5">
    <location>
        <begin position="380"/>
        <end position="387"/>
    </location>
</feature>
<feature type="turn" evidence="5">
    <location>
        <begin position="388"/>
        <end position="390"/>
    </location>
</feature>
<feature type="helix" evidence="5">
    <location>
        <begin position="392"/>
        <end position="397"/>
    </location>
</feature>
<feature type="strand" evidence="5">
    <location>
        <begin position="399"/>
        <end position="401"/>
    </location>
</feature>
<feature type="strand" evidence="5">
    <location>
        <begin position="404"/>
        <end position="407"/>
    </location>
</feature>
<feature type="strand" evidence="5">
    <location>
        <begin position="414"/>
        <end position="421"/>
    </location>
</feature>
<feature type="strand" evidence="5">
    <location>
        <begin position="423"/>
        <end position="433"/>
    </location>
</feature>
<feature type="helix" evidence="5">
    <location>
        <begin position="436"/>
        <end position="457"/>
    </location>
</feature>
<sequence length="468" mass="52150">MFSITTLRDWTPDPGSIICWHASPTAKAKARQAPISEVPPSYQQAQHLRRYRDHVARGLDMSRLMIFTWDLPGRCNIRAMNYAINAHLRRHDTYHSWFEFDNAEHIVRHTIADPADIEVVQAEHQNMTSAELRHHIATPQPLQWDCFLFGIIQSDDHFTFYASIAHLCVDPMIVGVLFIEIHMMYSALVGGDPPIELPPAGRYDDHCVRQYADTAALTLDSARVRRWVEFAANNDGTLPHFPLPLGDLSVPHTGKLLTETLMDEQQGERFEAACVAAGARFSGGVFACAALAERELTNCETFDVVTTTDTRRTPTELRTTGWFTGLVPITVPVASGLFDSAARVAQISFDSGKDLATVPFDRVLELARPETGLRPPRPGNFVMSFLDASIAPLSTVANSDLNFRIYDEGRVSHQVSMWVNRYQHQTTVTVLFPDNPIASESVANYIAAMKSIYIRTADGTLATLKPGT</sequence>
<name>PAPA2_MYCTU</name>
<keyword id="KW-0002">3D-structure</keyword>
<keyword id="KW-0012">Acyltransferase</keyword>
<keyword id="KW-0961">Cell wall biogenesis/degradation</keyword>
<keyword id="KW-0444">Lipid biosynthesis</keyword>
<keyword id="KW-0443">Lipid metabolism</keyword>
<keyword id="KW-1185">Reference proteome</keyword>
<keyword id="KW-0808">Transferase</keyword>
<organism>
    <name type="scientific">Mycobacterium tuberculosis (strain ATCC 25618 / H37Rv)</name>
    <dbReference type="NCBI Taxonomy" id="83332"/>
    <lineage>
        <taxon>Bacteria</taxon>
        <taxon>Bacillati</taxon>
        <taxon>Actinomycetota</taxon>
        <taxon>Actinomycetes</taxon>
        <taxon>Mycobacteriales</taxon>
        <taxon>Mycobacteriaceae</taxon>
        <taxon>Mycobacterium</taxon>
        <taxon>Mycobacterium tuberculosis complex</taxon>
    </lineage>
</organism>